<proteinExistence type="inferred from homology"/>
<dbReference type="EC" id="6.5.1.2" evidence="1"/>
<dbReference type="EMBL" id="CP000860">
    <property type="protein sequence ID" value="ACA60119.1"/>
    <property type="molecule type" value="Genomic_DNA"/>
</dbReference>
<dbReference type="RefSeq" id="WP_012302700.1">
    <property type="nucleotide sequence ID" value="NC_010424.1"/>
</dbReference>
<dbReference type="SMR" id="B1I551"/>
<dbReference type="STRING" id="477974.Daud_1617"/>
<dbReference type="KEGG" id="dau:Daud_1617"/>
<dbReference type="eggNOG" id="COG0272">
    <property type="taxonomic scope" value="Bacteria"/>
</dbReference>
<dbReference type="HOGENOM" id="CLU_007764_2_1_9"/>
<dbReference type="OrthoDB" id="9759736at2"/>
<dbReference type="Proteomes" id="UP000008544">
    <property type="component" value="Chromosome"/>
</dbReference>
<dbReference type="GO" id="GO:0005829">
    <property type="term" value="C:cytosol"/>
    <property type="evidence" value="ECO:0007669"/>
    <property type="project" value="TreeGrafter"/>
</dbReference>
<dbReference type="GO" id="GO:0003677">
    <property type="term" value="F:DNA binding"/>
    <property type="evidence" value="ECO:0007669"/>
    <property type="project" value="InterPro"/>
</dbReference>
<dbReference type="GO" id="GO:0003911">
    <property type="term" value="F:DNA ligase (NAD+) activity"/>
    <property type="evidence" value="ECO:0007669"/>
    <property type="project" value="UniProtKB-UniRule"/>
</dbReference>
<dbReference type="GO" id="GO:0046872">
    <property type="term" value="F:metal ion binding"/>
    <property type="evidence" value="ECO:0007669"/>
    <property type="project" value="UniProtKB-KW"/>
</dbReference>
<dbReference type="GO" id="GO:0006281">
    <property type="term" value="P:DNA repair"/>
    <property type="evidence" value="ECO:0007669"/>
    <property type="project" value="UniProtKB-KW"/>
</dbReference>
<dbReference type="GO" id="GO:0006260">
    <property type="term" value="P:DNA replication"/>
    <property type="evidence" value="ECO:0007669"/>
    <property type="project" value="UniProtKB-KW"/>
</dbReference>
<dbReference type="CDD" id="cd17748">
    <property type="entry name" value="BRCT_DNA_ligase_like"/>
    <property type="match status" value="1"/>
</dbReference>
<dbReference type="CDD" id="cd00114">
    <property type="entry name" value="LIGANc"/>
    <property type="match status" value="1"/>
</dbReference>
<dbReference type="FunFam" id="1.10.150.20:FF:000006">
    <property type="entry name" value="DNA ligase"/>
    <property type="match status" value="1"/>
</dbReference>
<dbReference type="FunFam" id="1.10.150.20:FF:000007">
    <property type="entry name" value="DNA ligase"/>
    <property type="match status" value="1"/>
</dbReference>
<dbReference type="FunFam" id="1.10.287.610:FF:000002">
    <property type="entry name" value="DNA ligase"/>
    <property type="match status" value="1"/>
</dbReference>
<dbReference type="FunFam" id="2.40.50.140:FF:000012">
    <property type="entry name" value="DNA ligase"/>
    <property type="match status" value="1"/>
</dbReference>
<dbReference type="FunFam" id="3.30.470.30:FF:000001">
    <property type="entry name" value="DNA ligase"/>
    <property type="match status" value="1"/>
</dbReference>
<dbReference type="Gene3D" id="6.20.10.30">
    <property type="match status" value="1"/>
</dbReference>
<dbReference type="Gene3D" id="1.10.150.20">
    <property type="entry name" value="5' to 3' exonuclease, C-terminal subdomain"/>
    <property type="match status" value="2"/>
</dbReference>
<dbReference type="Gene3D" id="3.40.50.10190">
    <property type="entry name" value="BRCT domain"/>
    <property type="match status" value="1"/>
</dbReference>
<dbReference type="Gene3D" id="3.30.470.30">
    <property type="entry name" value="DNA ligase/mRNA capping enzyme"/>
    <property type="match status" value="1"/>
</dbReference>
<dbReference type="Gene3D" id="1.10.287.610">
    <property type="entry name" value="Helix hairpin bin"/>
    <property type="match status" value="1"/>
</dbReference>
<dbReference type="Gene3D" id="2.40.50.140">
    <property type="entry name" value="Nucleic acid-binding proteins"/>
    <property type="match status" value="1"/>
</dbReference>
<dbReference type="HAMAP" id="MF_01588">
    <property type="entry name" value="DNA_ligase_A"/>
    <property type="match status" value="1"/>
</dbReference>
<dbReference type="InterPro" id="IPR001357">
    <property type="entry name" value="BRCT_dom"/>
</dbReference>
<dbReference type="InterPro" id="IPR036420">
    <property type="entry name" value="BRCT_dom_sf"/>
</dbReference>
<dbReference type="InterPro" id="IPR041663">
    <property type="entry name" value="DisA/LigA_HHH"/>
</dbReference>
<dbReference type="InterPro" id="IPR001679">
    <property type="entry name" value="DNA_ligase"/>
</dbReference>
<dbReference type="InterPro" id="IPR018239">
    <property type="entry name" value="DNA_ligase_AS"/>
</dbReference>
<dbReference type="InterPro" id="IPR033136">
    <property type="entry name" value="DNA_ligase_CS"/>
</dbReference>
<dbReference type="InterPro" id="IPR013839">
    <property type="entry name" value="DNAligase_adenylation"/>
</dbReference>
<dbReference type="InterPro" id="IPR013840">
    <property type="entry name" value="DNAligase_N"/>
</dbReference>
<dbReference type="InterPro" id="IPR003583">
    <property type="entry name" value="Hlx-hairpin-Hlx_DNA-bd_motif"/>
</dbReference>
<dbReference type="InterPro" id="IPR012340">
    <property type="entry name" value="NA-bd_OB-fold"/>
</dbReference>
<dbReference type="InterPro" id="IPR004150">
    <property type="entry name" value="NAD_DNA_ligase_OB"/>
</dbReference>
<dbReference type="InterPro" id="IPR010994">
    <property type="entry name" value="RuvA_2-like"/>
</dbReference>
<dbReference type="InterPro" id="IPR004149">
    <property type="entry name" value="Znf_DNAligase_C4"/>
</dbReference>
<dbReference type="NCBIfam" id="TIGR00575">
    <property type="entry name" value="dnlj"/>
    <property type="match status" value="1"/>
</dbReference>
<dbReference type="NCBIfam" id="NF005932">
    <property type="entry name" value="PRK07956.1"/>
    <property type="match status" value="1"/>
</dbReference>
<dbReference type="PANTHER" id="PTHR23389">
    <property type="entry name" value="CHROMOSOME TRANSMISSION FIDELITY FACTOR 18"/>
    <property type="match status" value="1"/>
</dbReference>
<dbReference type="PANTHER" id="PTHR23389:SF9">
    <property type="entry name" value="DNA LIGASE"/>
    <property type="match status" value="1"/>
</dbReference>
<dbReference type="Pfam" id="PF00533">
    <property type="entry name" value="BRCT"/>
    <property type="match status" value="1"/>
</dbReference>
<dbReference type="Pfam" id="PF01653">
    <property type="entry name" value="DNA_ligase_aden"/>
    <property type="match status" value="1"/>
</dbReference>
<dbReference type="Pfam" id="PF03120">
    <property type="entry name" value="DNA_ligase_OB"/>
    <property type="match status" value="1"/>
</dbReference>
<dbReference type="Pfam" id="PF03119">
    <property type="entry name" value="DNA_ligase_ZBD"/>
    <property type="match status" value="1"/>
</dbReference>
<dbReference type="Pfam" id="PF12826">
    <property type="entry name" value="HHH_2"/>
    <property type="match status" value="1"/>
</dbReference>
<dbReference type="Pfam" id="PF14520">
    <property type="entry name" value="HHH_5"/>
    <property type="match status" value="1"/>
</dbReference>
<dbReference type="Pfam" id="PF22745">
    <property type="entry name" value="Nlig-Ia"/>
    <property type="match status" value="1"/>
</dbReference>
<dbReference type="PIRSF" id="PIRSF001604">
    <property type="entry name" value="LigA"/>
    <property type="match status" value="1"/>
</dbReference>
<dbReference type="SMART" id="SM00292">
    <property type="entry name" value="BRCT"/>
    <property type="match status" value="1"/>
</dbReference>
<dbReference type="SMART" id="SM00278">
    <property type="entry name" value="HhH1"/>
    <property type="match status" value="3"/>
</dbReference>
<dbReference type="SMART" id="SM00532">
    <property type="entry name" value="LIGANc"/>
    <property type="match status" value="1"/>
</dbReference>
<dbReference type="SUPFAM" id="SSF52113">
    <property type="entry name" value="BRCT domain"/>
    <property type="match status" value="1"/>
</dbReference>
<dbReference type="SUPFAM" id="SSF56091">
    <property type="entry name" value="DNA ligase/mRNA capping enzyme, catalytic domain"/>
    <property type="match status" value="1"/>
</dbReference>
<dbReference type="SUPFAM" id="SSF50249">
    <property type="entry name" value="Nucleic acid-binding proteins"/>
    <property type="match status" value="1"/>
</dbReference>
<dbReference type="SUPFAM" id="SSF47781">
    <property type="entry name" value="RuvA domain 2-like"/>
    <property type="match status" value="1"/>
</dbReference>
<dbReference type="PROSITE" id="PS50172">
    <property type="entry name" value="BRCT"/>
    <property type="match status" value="1"/>
</dbReference>
<dbReference type="PROSITE" id="PS01055">
    <property type="entry name" value="DNA_LIGASE_N1"/>
    <property type="match status" value="1"/>
</dbReference>
<dbReference type="PROSITE" id="PS01056">
    <property type="entry name" value="DNA_LIGASE_N2"/>
    <property type="match status" value="1"/>
</dbReference>
<accession>B1I551</accession>
<reference key="1">
    <citation type="submission" date="2007-10" db="EMBL/GenBank/DDBJ databases">
        <title>Complete sequence of chromosome of Desulforudis audaxviator MP104C.</title>
        <authorList>
            <person name="Copeland A."/>
            <person name="Lucas S."/>
            <person name="Lapidus A."/>
            <person name="Barry K."/>
            <person name="Glavina del Rio T."/>
            <person name="Dalin E."/>
            <person name="Tice H."/>
            <person name="Bruce D."/>
            <person name="Pitluck S."/>
            <person name="Lowry S.R."/>
            <person name="Larimer F."/>
            <person name="Land M.L."/>
            <person name="Hauser L."/>
            <person name="Kyrpides N."/>
            <person name="Ivanova N.N."/>
            <person name="Richardson P."/>
        </authorList>
    </citation>
    <scope>NUCLEOTIDE SEQUENCE [LARGE SCALE GENOMIC DNA]</scope>
    <source>
        <strain>MP104C</strain>
    </source>
</reference>
<gene>
    <name evidence="1" type="primary">ligA</name>
    <name type="ordered locus">Daud_1617</name>
</gene>
<feature type="chain" id="PRO_0000380362" description="DNA ligase">
    <location>
        <begin position="1"/>
        <end position="672"/>
    </location>
</feature>
<feature type="domain" description="BRCT" evidence="1">
    <location>
        <begin position="590"/>
        <end position="672"/>
    </location>
</feature>
<feature type="active site" description="N6-AMP-lysine intermediate" evidence="1">
    <location>
        <position position="116"/>
    </location>
</feature>
<feature type="binding site" evidence="1">
    <location>
        <begin position="34"/>
        <end position="38"/>
    </location>
    <ligand>
        <name>NAD(+)</name>
        <dbReference type="ChEBI" id="CHEBI:57540"/>
    </ligand>
</feature>
<feature type="binding site" evidence="1">
    <location>
        <begin position="83"/>
        <end position="84"/>
    </location>
    <ligand>
        <name>NAD(+)</name>
        <dbReference type="ChEBI" id="CHEBI:57540"/>
    </ligand>
</feature>
<feature type="binding site" evidence="1">
    <location>
        <position position="114"/>
    </location>
    <ligand>
        <name>NAD(+)</name>
        <dbReference type="ChEBI" id="CHEBI:57540"/>
    </ligand>
</feature>
<feature type="binding site" evidence="1">
    <location>
        <position position="137"/>
    </location>
    <ligand>
        <name>NAD(+)</name>
        <dbReference type="ChEBI" id="CHEBI:57540"/>
    </ligand>
</feature>
<feature type="binding site" evidence="1">
    <location>
        <position position="174"/>
    </location>
    <ligand>
        <name>NAD(+)</name>
        <dbReference type="ChEBI" id="CHEBI:57540"/>
    </ligand>
</feature>
<feature type="binding site" evidence="1">
    <location>
        <position position="290"/>
    </location>
    <ligand>
        <name>NAD(+)</name>
        <dbReference type="ChEBI" id="CHEBI:57540"/>
    </ligand>
</feature>
<feature type="binding site" evidence="1">
    <location>
        <position position="314"/>
    </location>
    <ligand>
        <name>NAD(+)</name>
        <dbReference type="ChEBI" id="CHEBI:57540"/>
    </ligand>
</feature>
<feature type="binding site" evidence="1">
    <location>
        <position position="408"/>
    </location>
    <ligand>
        <name>Zn(2+)</name>
        <dbReference type="ChEBI" id="CHEBI:29105"/>
    </ligand>
</feature>
<feature type="binding site" evidence="1">
    <location>
        <position position="411"/>
    </location>
    <ligand>
        <name>Zn(2+)</name>
        <dbReference type="ChEBI" id="CHEBI:29105"/>
    </ligand>
</feature>
<feature type="binding site" evidence="1">
    <location>
        <position position="426"/>
    </location>
    <ligand>
        <name>Zn(2+)</name>
        <dbReference type="ChEBI" id="CHEBI:29105"/>
    </ligand>
</feature>
<feature type="binding site" evidence="1">
    <location>
        <position position="431"/>
    </location>
    <ligand>
        <name>Zn(2+)</name>
        <dbReference type="ChEBI" id="CHEBI:29105"/>
    </ligand>
</feature>
<evidence type="ECO:0000255" key="1">
    <source>
        <dbReference type="HAMAP-Rule" id="MF_01588"/>
    </source>
</evidence>
<keyword id="KW-0227">DNA damage</keyword>
<keyword id="KW-0234">DNA repair</keyword>
<keyword id="KW-0235">DNA replication</keyword>
<keyword id="KW-0436">Ligase</keyword>
<keyword id="KW-0460">Magnesium</keyword>
<keyword id="KW-0464">Manganese</keyword>
<keyword id="KW-0479">Metal-binding</keyword>
<keyword id="KW-0520">NAD</keyword>
<keyword id="KW-1185">Reference proteome</keyword>
<keyword id="KW-0862">Zinc</keyword>
<name>DNLJ_DESAP</name>
<organism>
    <name type="scientific">Desulforudis audaxviator (strain MP104C)</name>
    <dbReference type="NCBI Taxonomy" id="477974"/>
    <lineage>
        <taxon>Bacteria</taxon>
        <taxon>Bacillati</taxon>
        <taxon>Bacillota</taxon>
        <taxon>Clostridia</taxon>
        <taxon>Thermoanaerobacterales</taxon>
        <taxon>Candidatus Desulforudaceae</taxon>
        <taxon>Candidatus Desulforudis</taxon>
    </lineage>
</organism>
<comment type="function">
    <text evidence="1">DNA ligase that catalyzes the formation of phosphodiester linkages between 5'-phosphoryl and 3'-hydroxyl groups in double-stranded DNA using NAD as a coenzyme and as the energy source for the reaction. It is essential for DNA replication and repair of damaged DNA.</text>
</comment>
<comment type="catalytic activity">
    <reaction evidence="1">
        <text>NAD(+) + (deoxyribonucleotide)n-3'-hydroxyl + 5'-phospho-(deoxyribonucleotide)m = (deoxyribonucleotide)n+m + AMP + beta-nicotinamide D-nucleotide.</text>
        <dbReference type="EC" id="6.5.1.2"/>
    </reaction>
</comment>
<comment type="cofactor">
    <cofactor evidence="1">
        <name>Mg(2+)</name>
        <dbReference type="ChEBI" id="CHEBI:18420"/>
    </cofactor>
    <cofactor evidence="1">
        <name>Mn(2+)</name>
        <dbReference type="ChEBI" id="CHEBI:29035"/>
    </cofactor>
</comment>
<comment type="similarity">
    <text evidence="1">Belongs to the NAD-dependent DNA ligase family. LigA subfamily.</text>
</comment>
<protein>
    <recommendedName>
        <fullName evidence="1">DNA ligase</fullName>
        <ecNumber evidence="1">6.5.1.2</ecNumber>
    </recommendedName>
    <alternativeName>
        <fullName evidence="1">Polydeoxyribonucleotide synthase [NAD(+)]</fullName>
    </alternativeName>
</protein>
<sequence>MKPEEARARAEELRREIEYHDHRYYVLDDPVIEDAEYDRLVRELVALETAYPELVTPDSPTQRVGGRPREGFVTVQHRAPMLSLANAFNAADLADFDRRVRTGLADEDVDYVVELKFDGVAVSLTYEHGRLVRGATRGDGVTGEEITPNLRTIRSIPLRLRQPGAPNVIEVRGEVYMPKEAFARLNERREDAGLPLFANPRNAAAGSLRQLDPGITAERKLDIWLYGIGYTDGIVFGRHSEALAWLGEQGFRVNPHTRIFSTLEEVERHLEHWREARFELPYVIDGLVLKVDRLDQQERLGTTLKSPRWAVAYKYPPEQAETTVEDIIIRVGRTGVLTPTAVLSPVRLAGTTVSRASLHNEDLIREKDIRIGDVVLIHKAGDIIPEILGSRPEKRTGRETPFAMPVQCPECASLLVRPEGEVGVYCSNVACPARLERSLLHFVSRNAFAINGLGPAVIQQLLERRLVADPADLFTLTREELVGLERIGPKSADNLLKAIQNSKRNSLARLIFSLGIRHVGERAARLLAERFGSLAGLMAAGREELEAVPEIGPKIADSVLNFFAREQNRRVVAKLVRAGVNTVADRPAAAGTGPLAGKTFVLTGTLEEFSRAEAAARIEELGGRVVSNVSRRTDYVVLGKNPGGKYDKAVKLGVNIIEEPEFKRLLSGIQSY</sequence>